<comment type="function">
    <text evidence="1">F(1)F(0) ATP synthase produces ATP from ADP in the presence of a proton or sodium gradient. F-type ATPases consist of two structural domains, F(1) containing the extramembraneous catalytic core and F(0) containing the membrane proton channel, linked together by a central stalk and a peripheral stalk. During catalysis, ATP synthesis in the catalytic domain of F(1) is coupled via a rotary mechanism of the central stalk subunits to proton translocation.</text>
</comment>
<comment type="function">
    <text evidence="1">Key component of the F(0) channel; it plays a direct role in translocation across the membrane. A homomeric c-ring of between 10-14 subunits forms the central stalk rotor element with the F(1) delta and epsilon subunits.</text>
</comment>
<comment type="subunit">
    <text evidence="1">F-type ATPases have 2 components, F(1) - the catalytic core - and F(0) - the membrane proton channel. F(1) has five subunits: alpha(3), beta(3), gamma(1), delta(1), epsilon(1). F(0) has three main subunits: a(1), b(2) and c(10-14). The alpha and beta chains form an alternating ring which encloses part of the gamma chain. F(1) is attached to F(0) by a central stalk formed by the gamma and epsilon chains, while a peripheral stalk is formed by the delta and b chains.</text>
</comment>
<comment type="subcellular location">
    <subcellularLocation>
        <location evidence="1">Cell membrane</location>
        <topology evidence="1">Multi-pass membrane protein</topology>
    </subcellularLocation>
</comment>
<comment type="similarity">
    <text evidence="1">Belongs to the ATPase C chain family.</text>
</comment>
<reference key="1">
    <citation type="journal article" date="2008" name="Chem. Biol. Interact.">
        <title>Extending the Bacillus cereus group genomics to putative food-borne pathogens of different toxicity.</title>
        <authorList>
            <person name="Lapidus A."/>
            <person name="Goltsman E."/>
            <person name="Auger S."/>
            <person name="Galleron N."/>
            <person name="Segurens B."/>
            <person name="Dossat C."/>
            <person name="Land M.L."/>
            <person name="Broussolle V."/>
            <person name="Brillard J."/>
            <person name="Guinebretiere M.-H."/>
            <person name="Sanchis V."/>
            <person name="Nguen-the C."/>
            <person name="Lereclus D."/>
            <person name="Richardson P."/>
            <person name="Wincker P."/>
            <person name="Weissenbach J."/>
            <person name="Ehrlich S.D."/>
            <person name="Sorokin A."/>
        </authorList>
    </citation>
    <scope>NUCLEOTIDE SEQUENCE [LARGE SCALE GENOMIC DNA]</scope>
    <source>
        <strain>DSM 22905 / CIP 110041 / 391-98 / NVH 391-98</strain>
    </source>
</reference>
<gene>
    <name evidence="1" type="primary">atpE</name>
    <name type="ordered locus">Bcer98_3830</name>
</gene>
<protein>
    <recommendedName>
        <fullName evidence="1">ATP synthase subunit c</fullName>
    </recommendedName>
    <alternativeName>
        <fullName evidence="1">ATP synthase F(0) sector subunit c</fullName>
    </alternativeName>
    <alternativeName>
        <fullName evidence="1">F-type ATPase subunit c</fullName>
        <shortName evidence="1">F-ATPase subunit c</shortName>
    </alternativeName>
    <alternativeName>
        <fullName evidence="1">Lipid-binding protein</fullName>
    </alternativeName>
</protein>
<keyword id="KW-0066">ATP synthesis</keyword>
<keyword id="KW-1003">Cell membrane</keyword>
<keyword id="KW-0138">CF(0)</keyword>
<keyword id="KW-0375">Hydrogen ion transport</keyword>
<keyword id="KW-0406">Ion transport</keyword>
<keyword id="KW-0446">Lipid-binding</keyword>
<keyword id="KW-0472">Membrane</keyword>
<keyword id="KW-0812">Transmembrane</keyword>
<keyword id="KW-1133">Transmembrane helix</keyword>
<keyword id="KW-0813">Transport</keyword>
<name>ATPL_BACCN</name>
<accession>A7GV61</accession>
<organism>
    <name type="scientific">Bacillus cytotoxicus (strain DSM 22905 / CIP 110041 / 391-98 / NVH 391-98)</name>
    <dbReference type="NCBI Taxonomy" id="315749"/>
    <lineage>
        <taxon>Bacteria</taxon>
        <taxon>Bacillati</taxon>
        <taxon>Bacillota</taxon>
        <taxon>Bacilli</taxon>
        <taxon>Bacillales</taxon>
        <taxon>Bacillaceae</taxon>
        <taxon>Bacillus</taxon>
        <taxon>Bacillus cereus group</taxon>
    </lineage>
</organism>
<evidence type="ECO:0000255" key="1">
    <source>
        <dbReference type="HAMAP-Rule" id="MF_01396"/>
    </source>
</evidence>
<dbReference type="EMBL" id="CP000764">
    <property type="protein sequence ID" value="ABS24019.1"/>
    <property type="molecule type" value="Genomic_DNA"/>
</dbReference>
<dbReference type="RefSeq" id="WP_012096277.1">
    <property type="nucleotide sequence ID" value="NC_009674.1"/>
</dbReference>
<dbReference type="SMR" id="A7GV61"/>
<dbReference type="STRING" id="315749.Bcer98_3830"/>
<dbReference type="GeneID" id="33899071"/>
<dbReference type="KEGG" id="bcy:Bcer98_3830"/>
<dbReference type="eggNOG" id="COG0636">
    <property type="taxonomic scope" value="Bacteria"/>
</dbReference>
<dbReference type="HOGENOM" id="CLU_148047_1_1_9"/>
<dbReference type="OrthoDB" id="2357540at2"/>
<dbReference type="Proteomes" id="UP000002300">
    <property type="component" value="Chromosome"/>
</dbReference>
<dbReference type="GO" id="GO:0005886">
    <property type="term" value="C:plasma membrane"/>
    <property type="evidence" value="ECO:0007669"/>
    <property type="project" value="UniProtKB-SubCell"/>
</dbReference>
<dbReference type="GO" id="GO:0045259">
    <property type="term" value="C:proton-transporting ATP synthase complex"/>
    <property type="evidence" value="ECO:0007669"/>
    <property type="project" value="UniProtKB-KW"/>
</dbReference>
<dbReference type="GO" id="GO:0033177">
    <property type="term" value="C:proton-transporting two-sector ATPase complex, proton-transporting domain"/>
    <property type="evidence" value="ECO:0007669"/>
    <property type="project" value="InterPro"/>
</dbReference>
<dbReference type="GO" id="GO:0008289">
    <property type="term" value="F:lipid binding"/>
    <property type="evidence" value="ECO:0007669"/>
    <property type="project" value="UniProtKB-KW"/>
</dbReference>
<dbReference type="GO" id="GO:0046933">
    <property type="term" value="F:proton-transporting ATP synthase activity, rotational mechanism"/>
    <property type="evidence" value="ECO:0007669"/>
    <property type="project" value="UniProtKB-UniRule"/>
</dbReference>
<dbReference type="CDD" id="cd18185">
    <property type="entry name" value="ATP-synt_Fo_c_ATPE"/>
    <property type="match status" value="1"/>
</dbReference>
<dbReference type="FunFam" id="1.20.20.10:FF:000004">
    <property type="entry name" value="ATP synthase subunit c"/>
    <property type="match status" value="1"/>
</dbReference>
<dbReference type="Gene3D" id="1.20.20.10">
    <property type="entry name" value="F1F0 ATP synthase subunit C"/>
    <property type="match status" value="1"/>
</dbReference>
<dbReference type="HAMAP" id="MF_01396">
    <property type="entry name" value="ATP_synth_c_bact"/>
    <property type="match status" value="1"/>
</dbReference>
<dbReference type="InterPro" id="IPR005953">
    <property type="entry name" value="ATP_synth_csu_bac/chlpt"/>
</dbReference>
<dbReference type="InterPro" id="IPR000454">
    <property type="entry name" value="ATP_synth_F0_csu"/>
</dbReference>
<dbReference type="InterPro" id="IPR020537">
    <property type="entry name" value="ATP_synth_F0_csu_DDCD_BS"/>
</dbReference>
<dbReference type="InterPro" id="IPR038662">
    <property type="entry name" value="ATP_synth_F0_csu_sf"/>
</dbReference>
<dbReference type="InterPro" id="IPR002379">
    <property type="entry name" value="ATPase_proteolipid_c-like_dom"/>
</dbReference>
<dbReference type="InterPro" id="IPR035921">
    <property type="entry name" value="F/V-ATP_Csub_sf"/>
</dbReference>
<dbReference type="NCBIfam" id="TIGR01260">
    <property type="entry name" value="ATP_synt_c"/>
    <property type="match status" value="1"/>
</dbReference>
<dbReference type="NCBIfam" id="NF005363">
    <property type="entry name" value="PRK06876.1"/>
    <property type="match status" value="1"/>
</dbReference>
<dbReference type="PANTHER" id="PTHR10031">
    <property type="entry name" value="ATP SYNTHASE LIPID-BINDING PROTEIN, MITOCHONDRIAL"/>
    <property type="match status" value="1"/>
</dbReference>
<dbReference type="PANTHER" id="PTHR10031:SF0">
    <property type="entry name" value="ATPASE PROTEIN 9"/>
    <property type="match status" value="1"/>
</dbReference>
<dbReference type="Pfam" id="PF00137">
    <property type="entry name" value="ATP-synt_C"/>
    <property type="match status" value="1"/>
</dbReference>
<dbReference type="PRINTS" id="PR00124">
    <property type="entry name" value="ATPASEC"/>
</dbReference>
<dbReference type="SUPFAM" id="SSF81333">
    <property type="entry name" value="F1F0 ATP synthase subunit C"/>
    <property type="match status" value="1"/>
</dbReference>
<dbReference type="PROSITE" id="PS00605">
    <property type="entry name" value="ATPASE_C"/>
    <property type="match status" value="1"/>
</dbReference>
<feature type="chain" id="PRO_5000266777" description="ATP synthase subunit c">
    <location>
        <begin position="1"/>
        <end position="72"/>
    </location>
</feature>
<feature type="transmembrane region" description="Helical" evidence="1">
    <location>
        <begin position="1"/>
        <end position="21"/>
    </location>
</feature>
<feature type="transmembrane region" description="Helical" evidence="1">
    <location>
        <begin position="49"/>
        <end position="69"/>
    </location>
</feature>
<feature type="site" description="Reversibly protonated during proton transport" evidence="1">
    <location>
        <position position="56"/>
    </location>
</feature>
<proteinExistence type="inferred from homology"/>
<sequence>MSLGVIAAAIAIGLSALGAGIGNGLIVSRTIEGVARQPELKGALQTIMFIGVALVEALPIIGVVIAFIVMNR</sequence>